<dbReference type="EMBL" id="BC087155">
    <property type="protein sequence ID" value="AAH87155.1"/>
    <property type="molecule type" value="mRNA"/>
</dbReference>
<dbReference type="RefSeq" id="NP_001014037.1">
    <property type="nucleotide sequence ID" value="NM_001014015.1"/>
</dbReference>
<dbReference type="SMR" id="Q5M9F1"/>
<dbReference type="FunCoup" id="Q5M9F1">
    <property type="interactions" value="1923"/>
</dbReference>
<dbReference type="STRING" id="10116.ENSRNOP00000027145"/>
<dbReference type="iPTMnet" id="Q5M9F1"/>
<dbReference type="PhosphoSitePlus" id="Q5M9F1"/>
<dbReference type="PaxDb" id="10116-ENSRNOP00000027145"/>
<dbReference type="Ensembl" id="ENSRNOT00000027145.7">
    <property type="protein sequence ID" value="ENSRNOP00000027145.5"/>
    <property type="gene ID" value="ENSRNOG00000020004.7"/>
</dbReference>
<dbReference type="GeneID" id="307956"/>
<dbReference type="KEGG" id="rno:307956"/>
<dbReference type="UCSC" id="RGD:1310161">
    <property type="organism name" value="rat"/>
</dbReference>
<dbReference type="AGR" id="RGD:1310161"/>
<dbReference type="CTD" id="23029"/>
<dbReference type="RGD" id="1310161">
    <property type="gene designation" value="Rbm34"/>
</dbReference>
<dbReference type="eggNOG" id="KOG0118">
    <property type="taxonomic scope" value="Eukaryota"/>
</dbReference>
<dbReference type="GeneTree" id="ENSGT00390000011249"/>
<dbReference type="HOGENOM" id="CLU_050628_0_0_1"/>
<dbReference type="InParanoid" id="Q5M9F1"/>
<dbReference type="OMA" id="CAVPKKG"/>
<dbReference type="OrthoDB" id="442677at2759"/>
<dbReference type="PhylomeDB" id="Q5M9F1"/>
<dbReference type="TreeFam" id="TF313083"/>
<dbReference type="PRO" id="PR:Q5M9F1"/>
<dbReference type="Proteomes" id="UP000002494">
    <property type="component" value="Chromosome 19"/>
</dbReference>
<dbReference type="Bgee" id="ENSRNOG00000020004">
    <property type="expression patterns" value="Expressed in thymus and 20 other cell types or tissues"/>
</dbReference>
<dbReference type="GO" id="GO:0005730">
    <property type="term" value="C:nucleolus"/>
    <property type="evidence" value="ECO:0000318"/>
    <property type="project" value="GO_Central"/>
</dbReference>
<dbReference type="GO" id="GO:0003723">
    <property type="term" value="F:RNA binding"/>
    <property type="evidence" value="ECO:0000318"/>
    <property type="project" value="GO_Central"/>
</dbReference>
<dbReference type="GO" id="GO:0000463">
    <property type="term" value="P:maturation of LSU-rRNA from tricistronic rRNA transcript (SSU-rRNA, 5.8S rRNA, LSU-rRNA)"/>
    <property type="evidence" value="ECO:0000318"/>
    <property type="project" value="GO_Central"/>
</dbReference>
<dbReference type="CDD" id="cd12394">
    <property type="entry name" value="RRM1_RBM34"/>
    <property type="match status" value="1"/>
</dbReference>
<dbReference type="CDD" id="cd12395">
    <property type="entry name" value="RRM2_RBM34"/>
    <property type="match status" value="1"/>
</dbReference>
<dbReference type="FunFam" id="3.30.70.330:FF:000511">
    <property type="entry name" value="RNA binding motif protein 34"/>
    <property type="match status" value="1"/>
</dbReference>
<dbReference type="FunFam" id="3.30.70.330:FF:000561">
    <property type="entry name" value="RNA-binding protein 34 isoform X2"/>
    <property type="match status" value="1"/>
</dbReference>
<dbReference type="Gene3D" id="3.30.70.330">
    <property type="match status" value="2"/>
</dbReference>
<dbReference type="InterPro" id="IPR012677">
    <property type="entry name" value="Nucleotide-bd_a/b_plait_sf"/>
</dbReference>
<dbReference type="InterPro" id="IPR035979">
    <property type="entry name" value="RBD_domain_sf"/>
</dbReference>
<dbReference type="InterPro" id="IPR034221">
    <property type="entry name" value="RBM34_RRM2"/>
</dbReference>
<dbReference type="InterPro" id="IPR000504">
    <property type="entry name" value="RRM_dom"/>
</dbReference>
<dbReference type="PANTHER" id="PTHR23236">
    <property type="entry name" value="EUKARYOTIC TRANSLATION INITIATION FACTOR 4B/4H"/>
    <property type="match status" value="1"/>
</dbReference>
<dbReference type="PANTHER" id="PTHR23236:SF25">
    <property type="entry name" value="RNA-BINDING PROTEIN 34"/>
    <property type="match status" value="1"/>
</dbReference>
<dbReference type="Pfam" id="PF00076">
    <property type="entry name" value="RRM_1"/>
    <property type="match status" value="2"/>
</dbReference>
<dbReference type="SMART" id="SM00360">
    <property type="entry name" value="RRM"/>
    <property type="match status" value="2"/>
</dbReference>
<dbReference type="SUPFAM" id="SSF54928">
    <property type="entry name" value="RNA-binding domain, RBD"/>
    <property type="match status" value="2"/>
</dbReference>
<dbReference type="PROSITE" id="PS50102">
    <property type="entry name" value="RRM"/>
    <property type="match status" value="2"/>
</dbReference>
<feature type="chain" id="PRO_0000081792" description="RNA-binding protein 34">
    <location>
        <begin position="1"/>
        <end position="428"/>
    </location>
</feature>
<feature type="domain" description="RRM 1" evidence="3">
    <location>
        <begin position="183"/>
        <end position="278"/>
    </location>
</feature>
<feature type="domain" description="RRM 2" evidence="3">
    <location>
        <begin position="285"/>
        <end position="362"/>
    </location>
</feature>
<feature type="region of interest" description="Disordered" evidence="4">
    <location>
        <begin position="1"/>
        <end position="106"/>
    </location>
</feature>
<feature type="region of interest" description="Disordered" evidence="4">
    <location>
        <begin position="127"/>
        <end position="152"/>
    </location>
</feature>
<feature type="region of interest" description="Disordered" evidence="4">
    <location>
        <begin position="361"/>
        <end position="428"/>
    </location>
</feature>
<feature type="compositionally biased region" description="Basic residues" evidence="4">
    <location>
        <begin position="408"/>
        <end position="428"/>
    </location>
</feature>
<feature type="modified residue" description="N6-acetyllysine" evidence="2">
    <location>
        <position position="147"/>
    </location>
</feature>
<feature type="modified residue" description="Phosphoserine" evidence="1">
    <location>
        <position position="286"/>
    </location>
</feature>
<feature type="cross-link" description="Glycyl lysine isopeptide (Lys-Gly) (interchain with G-Cter in SUMO2)" evidence="1">
    <location>
        <position position="240"/>
    </location>
</feature>
<reference key="1">
    <citation type="journal article" date="2004" name="Genome Res.">
        <title>The status, quality, and expansion of the NIH full-length cDNA project: the Mammalian Gene Collection (MGC).</title>
        <authorList>
            <consortium name="The MGC Project Team"/>
        </authorList>
    </citation>
    <scope>NUCLEOTIDE SEQUENCE [LARGE SCALE MRNA]</scope>
    <source>
        <tissue>Testis</tissue>
    </source>
</reference>
<reference key="2">
    <citation type="journal article" date="2012" name="Nat. Commun.">
        <title>Quantitative maps of protein phosphorylation sites across 14 different rat organs and tissues.</title>
        <authorList>
            <person name="Lundby A."/>
            <person name="Secher A."/>
            <person name="Lage K."/>
            <person name="Nordsborg N.B."/>
            <person name="Dmytriyev A."/>
            <person name="Lundby C."/>
            <person name="Olsen J.V."/>
        </authorList>
    </citation>
    <scope>IDENTIFICATION BY MASS SPECTROMETRY [LARGE SCALE ANALYSIS]</scope>
</reference>
<keyword id="KW-0007">Acetylation</keyword>
<keyword id="KW-1017">Isopeptide bond</keyword>
<keyword id="KW-0539">Nucleus</keyword>
<keyword id="KW-0597">Phosphoprotein</keyword>
<keyword id="KW-1185">Reference proteome</keyword>
<keyword id="KW-0677">Repeat</keyword>
<keyword id="KW-0694">RNA-binding</keyword>
<keyword id="KW-0832">Ubl conjugation</keyword>
<proteinExistence type="evidence at protein level"/>
<evidence type="ECO:0000250" key="1">
    <source>
        <dbReference type="UniProtKB" id="P42696"/>
    </source>
</evidence>
<evidence type="ECO:0000250" key="2">
    <source>
        <dbReference type="UniProtKB" id="Q8C5L7"/>
    </source>
</evidence>
<evidence type="ECO:0000255" key="3">
    <source>
        <dbReference type="PROSITE-ProRule" id="PRU00176"/>
    </source>
</evidence>
<evidence type="ECO:0000256" key="4">
    <source>
        <dbReference type="SAM" id="MobiDB-lite"/>
    </source>
</evidence>
<evidence type="ECO:0000305" key="5"/>
<protein>
    <recommendedName>
        <fullName>RNA-binding protein 34</fullName>
    </recommendedName>
    <alternativeName>
        <fullName>RNA-binding motif protein 34</fullName>
    </alternativeName>
</protein>
<accession>Q5M9F1</accession>
<name>RBM34_RAT</name>
<sequence>MALRGEGRKRKKGQERRQSSEDDVGNAATDYLVGQVADSLRGGARPPGGGTGRLAALFSTPETLAPPVFVPVPQETSKKRKPDDEEETVAHIKKPALQEPARKVKVKKLSDADKRLANRESALANADLEEIRQDQGQGRRRSQSRGKVTDGEALDVALSLNEDGRQRTKVPLNPEEERLKNERTVFVGNLPVTCNKKKLKSFFKEYGQVESVRFRSVMPAEGTLSKKLAAIKRKFHPDQKSINAYVVFKEERAAAKALQRNGAQIAEGFRIRVDLASETASRDKRSVFVGNLPYRVDESALEEHFLDCGSIVAVRIVRNPLTGVGRGFGYVLFENTDAVHLALKLNNSELMGRKLRVMRSVNKEKLKQQNSNPSVKKDGSKSKQRLNFTSKEGKSHSKNAFIGEKAVLMKKKKGQKKKGQTKKPRKQK</sequence>
<comment type="subcellular location">
    <subcellularLocation>
        <location evidence="1">Nucleus</location>
        <location evidence="1">Nucleolus</location>
    </subcellularLocation>
</comment>
<comment type="similarity">
    <text evidence="5">Belongs to the RRM RBM34 family.</text>
</comment>
<organism>
    <name type="scientific">Rattus norvegicus</name>
    <name type="common">Rat</name>
    <dbReference type="NCBI Taxonomy" id="10116"/>
    <lineage>
        <taxon>Eukaryota</taxon>
        <taxon>Metazoa</taxon>
        <taxon>Chordata</taxon>
        <taxon>Craniata</taxon>
        <taxon>Vertebrata</taxon>
        <taxon>Euteleostomi</taxon>
        <taxon>Mammalia</taxon>
        <taxon>Eutheria</taxon>
        <taxon>Euarchontoglires</taxon>
        <taxon>Glires</taxon>
        <taxon>Rodentia</taxon>
        <taxon>Myomorpha</taxon>
        <taxon>Muroidea</taxon>
        <taxon>Muridae</taxon>
        <taxon>Murinae</taxon>
        <taxon>Rattus</taxon>
    </lineage>
</organism>
<gene>
    <name type="primary">Rbm34</name>
</gene>